<comment type="function">
    <text evidence="1">Part of a heterotetrameric complex that catalyzes the two-step biosynthesis of anthranilate, an intermediate in the biosynthesis of L-tryptophan. In the first step, the glutamine-binding beta subunit (TrpG) of anthranilate synthase (AS) provides the glutamine amidotransferase activity which generates ammonia as a substrate that, along with chorismate, is used in the second step, catalyzed by the large alpha subunit of AS (TrpE) to produce anthranilate. In the absence of TrpG, TrpE can synthesize anthranilate directly from chorismate and high concentrations of ammonia (By similarity).</text>
</comment>
<comment type="catalytic activity">
    <reaction>
        <text>chorismate + L-glutamine = anthranilate + pyruvate + L-glutamate + H(+)</text>
        <dbReference type="Rhea" id="RHEA:21732"/>
        <dbReference type="ChEBI" id="CHEBI:15361"/>
        <dbReference type="ChEBI" id="CHEBI:15378"/>
        <dbReference type="ChEBI" id="CHEBI:16567"/>
        <dbReference type="ChEBI" id="CHEBI:29748"/>
        <dbReference type="ChEBI" id="CHEBI:29985"/>
        <dbReference type="ChEBI" id="CHEBI:58359"/>
        <dbReference type="EC" id="4.1.3.27"/>
    </reaction>
</comment>
<comment type="cofactor">
    <cofactor evidence="2">
        <name>Mg(2+)</name>
        <dbReference type="ChEBI" id="CHEBI:18420"/>
    </cofactor>
    <text evidence="2">Binds 1 Mg(2+) ion per subunit.</text>
</comment>
<comment type="activity regulation">
    <text evidence="1">Feedback inhibited by tryptophan.</text>
</comment>
<comment type="pathway">
    <text>Amino-acid biosynthesis; L-tryptophan biosynthesis; L-tryptophan from chorismate: step 1/5.</text>
</comment>
<comment type="subunit">
    <text evidence="1">Heterotetramer consisting of two non-identical subunits: a beta subunit (TrpG) and a large alpha subunit (TrpE).</text>
</comment>
<comment type="similarity">
    <text evidence="3">Belongs to the anthranilate synthase component I family.</text>
</comment>
<accession>O27692</accession>
<gene>
    <name type="primary">trpE</name>
    <name type="ordered locus">MTH_1655</name>
</gene>
<sequence length="464" mass="52321">MNVFGITELKNPVKEKIEFKEPFELFKSIYSEYDSSFLLESMESDTGLARYSFMGFEPQMIIRARSGFIEVEYEGSREEFDTENPFEFLRQFTRPAGKSRGFCGGLVGYISYQAARFFDSINLSPGNFPDFEFGLFLDGIMFNHLTGECSYISLKENRLPEISELLREETPTGHLKYRSMGTLFSRRRYLGMVEEARERIAEGEIFQAVLSNATDYRLRGDRLALYEALRRVNPSPYMYHLKLGSREITGSSPEMLVRVEDKQIETFPIAGTRPRGKTPHEDERIAAELLSDEKELAEHLMLVDLARNDLGRISEFGTVQVPEYMTIRRFSHVQHILSHVTGRLRKGMDALDALGAVFPAGTVSGAPKIRAMEIIESLEGVPRNAYAGALGYLSLNGNADFAITIRSMVAEGAYGRIQAGAGIVHDSVPEREYVECQNKAMAVLKSMELAGDGFDSDEPFIARR</sequence>
<dbReference type="EC" id="4.1.3.27"/>
<dbReference type="EMBL" id="AE000666">
    <property type="protein sequence ID" value="AAB86127.1"/>
    <property type="molecule type" value="Genomic_DNA"/>
</dbReference>
<dbReference type="PIR" id="C69088">
    <property type="entry name" value="C69088"/>
</dbReference>
<dbReference type="RefSeq" id="WP_010877263.1">
    <property type="nucleotide sequence ID" value="NC_000916.1"/>
</dbReference>
<dbReference type="SMR" id="O27692"/>
<dbReference type="FunCoup" id="O27692">
    <property type="interactions" value="125"/>
</dbReference>
<dbReference type="STRING" id="187420.MTH_1655"/>
<dbReference type="PaxDb" id="187420-MTH_1655"/>
<dbReference type="EnsemblBacteria" id="AAB86127">
    <property type="protein sequence ID" value="AAB86127"/>
    <property type="gene ID" value="MTH_1655"/>
</dbReference>
<dbReference type="GeneID" id="1470740"/>
<dbReference type="KEGG" id="mth:MTH_1655"/>
<dbReference type="PATRIC" id="fig|187420.15.peg.1617"/>
<dbReference type="HOGENOM" id="CLU_006493_9_3_2"/>
<dbReference type="InParanoid" id="O27692"/>
<dbReference type="UniPathway" id="UPA00035">
    <property type="reaction ID" value="UER00040"/>
</dbReference>
<dbReference type="Proteomes" id="UP000005223">
    <property type="component" value="Chromosome"/>
</dbReference>
<dbReference type="GO" id="GO:0004049">
    <property type="term" value="F:anthranilate synthase activity"/>
    <property type="evidence" value="ECO:0007669"/>
    <property type="project" value="UniProtKB-EC"/>
</dbReference>
<dbReference type="GO" id="GO:0046872">
    <property type="term" value="F:metal ion binding"/>
    <property type="evidence" value="ECO:0007669"/>
    <property type="project" value="UniProtKB-KW"/>
</dbReference>
<dbReference type="GO" id="GO:0000162">
    <property type="term" value="P:L-tryptophan biosynthetic process"/>
    <property type="evidence" value="ECO:0007669"/>
    <property type="project" value="UniProtKB-UniPathway"/>
</dbReference>
<dbReference type="Gene3D" id="3.60.120.10">
    <property type="entry name" value="Anthranilate synthase"/>
    <property type="match status" value="1"/>
</dbReference>
<dbReference type="InterPro" id="IPR005801">
    <property type="entry name" value="ADC_synthase"/>
</dbReference>
<dbReference type="InterPro" id="IPR019999">
    <property type="entry name" value="Anth_synth_I-like"/>
</dbReference>
<dbReference type="InterPro" id="IPR006805">
    <property type="entry name" value="Anth_synth_I_N"/>
</dbReference>
<dbReference type="InterPro" id="IPR010116">
    <property type="entry name" value="Anthranilate_synth_I_arc_typ"/>
</dbReference>
<dbReference type="InterPro" id="IPR015890">
    <property type="entry name" value="Chorismate_C"/>
</dbReference>
<dbReference type="NCBIfam" id="TIGR01820">
    <property type="entry name" value="TrpE-arch"/>
    <property type="match status" value="1"/>
</dbReference>
<dbReference type="PANTHER" id="PTHR11236">
    <property type="entry name" value="AMINOBENZOATE/ANTHRANILATE SYNTHASE"/>
    <property type="match status" value="1"/>
</dbReference>
<dbReference type="PANTHER" id="PTHR11236:SF9">
    <property type="entry name" value="ANTHRANILATE SYNTHASE COMPONENT 1"/>
    <property type="match status" value="1"/>
</dbReference>
<dbReference type="Pfam" id="PF04715">
    <property type="entry name" value="Anth_synt_I_N"/>
    <property type="match status" value="1"/>
</dbReference>
<dbReference type="Pfam" id="PF00425">
    <property type="entry name" value="Chorismate_bind"/>
    <property type="match status" value="1"/>
</dbReference>
<dbReference type="PRINTS" id="PR00095">
    <property type="entry name" value="ANTSNTHASEI"/>
</dbReference>
<dbReference type="SUPFAM" id="SSF56322">
    <property type="entry name" value="ADC synthase"/>
    <property type="match status" value="1"/>
</dbReference>
<reference key="1">
    <citation type="journal article" date="1997" name="J. Bacteriol.">
        <title>Complete genome sequence of Methanobacterium thermoautotrophicum deltaH: functional analysis and comparative genomics.</title>
        <authorList>
            <person name="Smith D.R."/>
            <person name="Doucette-Stamm L.A."/>
            <person name="Deloughery C."/>
            <person name="Lee H.-M."/>
            <person name="Dubois J."/>
            <person name="Aldredge T."/>
            <person name="Bashirzadeh R."/>
            <person name="Blakely D."/>
            <person name="Cook R."/>
            <person name="Gilbert K."/>
            <person name="Harrison D."/>
            <person name="Hoang L."/>
            <person name="Keagle P."/>
            <person name="Lumm W."/>
            <person name="Pothier B."/>
            <person name="Qiu D."/>
            <person name="Spadafora R."/>
            <person name="Vicare R."/>
            <person name="Wang Y."/>
            <person name="Wierzbowski J."/>
            <person name="Gibson R."/>
            <person name="Jiwani N."/>
            <person name="Caruso A."/>
            <person name="Bush D."/>
            <person name="Safer H."/>
            <person name="Patwell D."/>
            <person name="Prabhakar S."/>
            <person name="McDougall S."/>
            <person name="Shimer G."/>
            <person name="Goyal A."/>
            <person name="Pietrovski S."/>
            <person name="Church G.M."/>
            <person name="Daniels C.J."/>
            <person name="Mao J.-I."/>
            <person name="Rice P."/>
            <person name="Noelling J."/>
            <person name="Reeve J.N."/>
        </authorList>
    </citation>
    <scope>NUCLEOTIDE SEQUENCE [LARGE SCALE GENOMIC DNA]</scope>
    <source>
        <strain>ATCC 29096 / DSM 1053 / JCM 10044 / NBRC 100330 / Delta H</strain>
    </source>
</reference>
<proteinExistence type="inferred from homology"/>
<feature type="chain" id="PRO_0000154129" description="Anthranilate synthase component 1">
    <location>
        <begin position="1"/>
        <end position="464"/>
    </location>
</feature>
<feature type="binding site" evidence="2">
    <location>
        <position position="41"/>
    </location>
    <ligand>
        <name>L-tryptophan</name>
        <dbReference type="ChEBI" id="CHEBI:57912"/>
    </ligand>
</feature>
<feature type="binding site" evidence="2">
    <location>
        <begin position="236"/>
        <end position="238"/>
    </location>
    <ligand>
        <name>L-tryptophan</name>
        <dbReference type="ChEBI" id="CHEBI:57912"/>
    </ligand>
</feature>
<feature type="binding site" evidence="2">
    <location>
        <begin position="271"/>
        <end position="272"/>
    </location>
    <ligand>
        <name>chorismate</name>
        <dbReference type="ChEBI" id="CHEBI:29748"/>
    </ligand>
</feature>
<feature type="binding site" evidence="2">
    <location>
        <position position="298"/>
    </location>
    <ligand>
        <name>Mg(2+)</name>
        <dbReference type="ChEBI" id="CHEBI:18420"/>
    </ligand>
</feature>
<feature type="binding site" evidence="2">
    <location>
        <position position="386"/>
    </location>
    <ligand>
        <name>chorismate</name>
        <dbReference type="ChEBI" id="CHEBI:29748"/>
    </ligand>
</feature>
<feature type="binding site" evidence="2">
    <location>
        <position position="406"/>
    </location>
    <ligand>
        <name>chorismate</name>
        <dbReference type="ChEBI" id="CHEBI:29748"/>
    </ligand>
</feature>
<feature type="binding site" evidence="2">
    <location>
        <begin position="420"/>
        <end position="422"/>
    </location>
    <ligand>
        <name>chorismate</name>
        <dbReference type="ChEBI" id="CHEBI:29748"/>
    </ligand>
</feature>
<feature type="binding site" evidence="2">
    <location>
        <position position="422"/>
    </location>
    <ligand>
        <name>chorismate</name>
        <dbReference type="ChEBI" id="CHEBI:29748"/>
    </ligand>
</feature>
<feature type="binding site" evidence="2">
    <location>
        <position position="435"/>
    </location>
    <ligand>
        <name>Mg(2+)</name>
        <dbReference type="ChEBI" id="CHEBI:18420"/>
    </ligand>
</feature>
<keyword id="KW-0028">Amino-acid biosynthesis</keyword>
<keyword id="KW-0057">Aromatic amino acid biosynthesis</keyword>
<keyword id="KW-0456">Lyase</keyword>
<keyword id="KW-0460">Magnesium</keyword>
<keyword id="KW-0479">Metal-binding</keyword>
<keyword id="KW-1185">Reference proteome</keyword>
<keyword id="KW-0822">Tryptophan biosynthesis</keyword>
<organism>
    <name type="scientific">Methanothermobacter thermautotrophicus (strain ATCC 29096 / DSM 1053 / JCM 10044 / NBRC 100330 / Delta H)</name>
    <name type="common">Methanobacterium thermoautotrophicum</name>
    <dbReference type="NCBI Taxonomy" id="187420"/>
    <lineage>
        <taxon>Archaea</taxon>
        <taxon>Methanobacteriati</taxon>
        <taxon>Methanobacteriota</taxon>
        <taxon>Methanomada group</taxon>
        <taxon>Methanobacteria</taxon>
        <taxon>Methanobacteriales</taxon>
        <taxon>Methanobacteriaceae</taxon>
        <taxon>Methanothermobacter</taxon>
    </lineage>
</organism>
<name>TRPE_METTH</name>
<evidence type="ECO:0000250" key="1"/>
<evidence type="ECO:0000250" key="2">
    <source>
        <dbReference type="UniProtKB" id="P00897"/>
    </source>
</evidence>
<evidence type="ECO:0000305" key="3"/>
<protein>
    <recommendedName>
        <fullName>Anthranilate synthase component 1</fullName>
        <shortName>AS</shortName>
        <shortName>ASI</shortName>
        <ecNumber>4.1.3.27</ecNumber>
    </recommendedName>
</protein>